<gene>
    <name evidence="1" type="primary">gyrA</name>
    <name type="ordered locus">HQ_2651A</name>
</gene>
<proteinExistence type="inferred from homology"/>
<feature type="chain" id="PRO_0000409831" description="DNA gyrase subunit A">
    <location>
        <begin position="1"/>
        <end position="856"/>
    </location>
</feature>
<feature type="domain" description="Topo IIA-type catalytic" evidence="2">
    <location>
        <begin position="45"/>
        <end position="517"/>
    </location>
</feature>
<feature type="region of interest" description="Disordered" evidence="3">
    <location>
        <begin position="822"/>
        <end position="856"/>
    </location>
</feature>
<feature type="short sequence motif" description="GyrA-box" evidence="1">
    <location>
        <begin position="544"/>
        <end position="550"/>
    </location>
</feature>
<feature type="compositionally biased region" description="Acidic residues" evidence="3">
    <location>
        <begin position="835"/>
        <end position="847"/>
    </location>
</feature>
<feature type="active site" description="O-(5'-phospho-DNA)-tyrosine intermediate" evidence="1">
    <location>
        <position position="133"/>
    </location>
</feature>
<name>GYRA_HALWD</name>
<organism>
    <name type="scientific">Haloquadratum walsbyi (strain DSM 16790 / HBSQ001)</name>
    <dbReference type="NCBI Taxonomy" id="362976"/>
    <lineage>
        <taxon>Archaea</taxon>
        <taxon>Methanobacteriati</taxon>
        <taxon>Methanobacteriota</taxon>
        <taxon>Stenosarchaea group</taxon>
        <taxon>Halobacteria</taxon>
        <taxon>Halobacteriales</taxon>
        <taxon>Haloferacaceae</taxon>
        <taxon>Haloquadratum</taxon>
    </lineage>
</organism>
<comment type="function">
    <text evidence="1">A type II topoisomerase that negatively supercoils closed circular double-stranded (ds) DNA in an ATP-dependent manner to modulate DNA topology and maintain chromosomes in an underwound state. Negative supercoiling favors strand separation, and DNA replication, transcription, recombination and repair, all of which involve strand separation. Also able to catalyze the interconversion of other topological isomers of dsDNA rings, including catenanes and knotted rings. Type II topoisomerases break and join 2 DNA strands simultaneously in an ATP-dependent manner.</text>
</comment>
<comment type="catalytic activity">
    <reaction evidence="1">
        <text>ATP-dependent breakage, passage and rejoining of double-stranded DNA.</text>
        <dbReference type="EC" id="5.6.2.2"/>
    </reaction>
</comment>
<comment type="subunit">
    <text evidence="1">Heterotetramer, composed of two GyrA and two GyrB chains. In the heterotetramer, GyrA contains the active site tyrosine that forms a transient covalent intermediate with DNA, while GyrB binds cofactors and catalyzes ATP hydrolysis.</text>
</comment>
<comment type="subcellular location">
    <subcellularLocation>
        <location evidence="1">Cytoplasm</location>
    </subcellularLocation>
</comment>
<comment type="miscellaneous">
    <text evidence="1">Few gyrases are as efficient as E.coli at forming negative supercoils. Not all organisms have 2 type II topoisomerases; in organisms with a single type II topoisomerase this enzyme also has to decatenate newly replicated chromosomes.</text>
</comment>
<comment type="similarity">
    <text evidence="1">Belongs to the type II topoisomerase GyrA/ParC subunit family.</text>
</comment>
<accession>Q18GY3</accession>
<reference key="1">
    <citation type="journal article" date="2006" name="BMC Genomics">
        <title>The genome of the square archaeon Haloquadratum walsbyi: life at the limits of water activity.</title>
        <authorList>
            <person name="Bolhuis H."/>
            <person name="Palm P."/>
            <person name="Wende A."/>
            <person name="Falb M."/>
            <person name="Rampp M."/>
            <person name="Rodriguez-Valera F."/>
            <person name="Pfeiffer F."/>
            <person name="Oesterhelt D."/>
        </authorList>
    </citation>
    <scope>NUCLEOTIDE SEQUENCE [LARGE SCALE GENOMIC DNA]</scope>
    <source>
        <strain>DSM 16790 / HBSQ001</strain>
    </source>
</reference>
<dbReference type="EC" id="5.6.2.2" evidence="1"/>
<dbReference type="EMBL" id="AM180088">
    <property type="protein sequence ID" value="CAJ52762.1"/>
    <property type="molecule type" value="Genomic_DNA"/>
</dbReference>
<dbReference type="RefSeq" id="WP_011571878.1">
    <property type="nucleotide sequence ID" value="NC_008212.1"/>
</dbReference>
<dbReference type="SMR" id="Q18GY3"/>
<dbReference type="STRING" id="362976.HQ_2651A"/>
<dbReference type="GeneID" id="4194090"/>
<dbReference type="KEGG" id="hwa:HQ_2651A"/>
<dbReference type="eggNOG" id="arCOG04367">
    <property type="taxonomic scope" value="Archaea"/>
</dbReference>
<dbReference type="HOGENOM" id="CLU_002977_6_1_2"/>
<dbReference type="Proteomes" id="UP000001975">
    <property type="component" value="Chromosome"/>
</dbReference>
<dbReference type="GO" id="GO:0005694">
    <property type="term" value="C:chromosome"/>
    <property type="evidence" value="ECO:0007669"/>
    <property type="project" value="InterPro"/>
</dbReference>
<dbReference type="GO" id="GO:0005737">
    <property type="term" value="C:cytoplasm"/>
    <property type="evidence" value="ECO:0007669"/>
    <property type="project" value="UniProtKB-SubCell"/>
</dbReference>
<dbReference type="GO" id="GO:0009330">
    <property type="term" value="C:DNA topoisomerase type II (double strand cut, ATP-hydrolyzing) complex"/>
    <property type="evidence" value="ECO:0007669"/>
    <property type="project" value="TreeGrafter"/>
</dbReference>
<dbReference type="GO" id="GO:0005524">
    <property type="term" value="F:ATP binding"/>
    <property type="evidence" value="ECO:0007669"/>
    <property type="project" value="UniProtKB-UniRule"/>
</dbReference>
<dbReference type="GO" id="GO:0003677">
    <property type="term" value="F:DNA binding"/>
    <property type="evidence" value="ECO:0007669"/>
    <property type="project" value="UniProtKB-UniRule"/>
</dbReference>
<dbReference type="GO" id="GO:0003918">
    <property type="term" value="F:DNA topoisomerase type II (double strand cut, ATP-hydrolyzing) activity"/>
    <property type="evidence" value="ECO:0007669"/>
    <property type="project" value="UniProtKB-UniRule"/>
</dbReference>
<dbReference type="GO" id="GO:0006265">
    <property type="term" value="P:DNA topological change"/>
    <property type="evidence" value="ECO:0007669"/>
    <property type="project" value="UniProtKB-UniRule"/>
</dbReference>
<dbReference type="GO" id="GO:0006261">
    <property type="term" value="P:DNA-templated DNA replication"/>
    <property type="evidence" value="ECO:0007669"/>
    <property type="project" value="UniProtKB-UniRule"/>
</dbReference>
<dbReference type="CDD" id="cd00187">
    <property type="entry name" value="TOP4c"/>
    <property type="match status" value="1"/>
</dbReference>
<dbReference type="FunFam" id="1.10.268.10:FF:000001">
    <property type="entry name" value="DNA gyrase subunit A"/>
    <property type="match status" value="1"/>
</dbReference>
<dbReference type="FunFam" id="3.30.1360.40:FF:000002">
    <property type="entry name" value="DNA gyrase subunit A"/>
    <property type="match status" value="1"/>
</dbReference>
<dbReference type="FunFam" id="3.90.199.10:FF:000001">
    <property type="entry name" value="DNA gyrase subunit A"/>
    <property type="match status" value="1"/>
</dbReference>
<dbReference type="FunFam" id="2.120.10.90:FF:000005">
    <property type="entry name" value="DNA topoisomerase 4 subunit A"/>
    <property type="match status" value="1"/>
</dbReference>
<dbReference type="Gene3D" id="3.30.1360.40">
    <property type="match status" value="1"/>
</dbReference>
<dbReference type="Gene3D" id="2.120.10.90">
    <property type="entry name" value="DNA gyrase/topoisomerase IV, subunit A, C-terminal"/>
    <property type="match status" value="1"/>
</dbReference>
<dbReference type="Gene3D" id="3.90.199.10">
    <property type="entry name" value="Topoisomerase II, domain 5"/>
    <property type="match status" value="1"/>
</dbReference>
<dbReference type="Gene3D" id="1.10.268.10">
    <property type="entry name" value="Topoisomerase, domain 3"/>
    <property type="match status" value="1"/>
</dbReference>
<dbReference type="HAMAP" id="MF_01897">
    <property type="entry name" value="GyrA"/>
    <property type="match status" value="1"/>
</dbReference>
<dbReference type="InterPro" id="IPR005743">
    <property type="entry name" value="GyrA"/>
</dbReference>
<dbReference type="InterPro" id="IPR006691">
    <property type="entry name" value="GyrA/parC_rep"/>
</dbReference>
<dbReference type="InterPro" id="IPR035516">
    <property type="entry name" value="Gyrase/topoIV_suA_C"/>
</dbReference>
<dbReference type="InterPro" id="IPR013760">
    <property type="entry name" value="Topo_IIA-like_dom_sf"/>
</dbReference>
<dbReference type="InterPro" id="IPR013758">
    <property type="entry name" value="Topo_IIA_A/C_ab"/>
</dbReference>
<dbReference type="InterPro" id="IPR013757">
    <property type="entry name" value="Topo_IIA_A_a_sf"/>
</dbReference>
<dbReference type="InterPro" id="IPR002205">
    <property type="entry name" value="Topo_IIA_dom_A"/>
</dbReference>
<dbReference type="InterPro" id="IPR050220">
    <property type="entry name" value="Type_II_DNA_Topoisomerases"/>
</dbReference>
<dbReference type="NCBIfam" id="TIGR01063">
    <property type="entry name" value="gyrA"/>
    <property type="match status" value="1"/>
</dbReference>
<dbReference type="NCBIfam" id="NF004043">
    <property type="entry name" value="PRK05560.1"/>
    <property type="match status" value="1"/>
</dbReference>
<dbReference type="NCBIfam" id="NF004044">
    <property type="entry name" value="PRK05561.1"/>
    <property type="match status" value="1"/>
</dbReference>
<dbReference type="PANTHER" id="PTHR43493:SF5">
    <property type="entry name" value="DNA GYRASE SUBUNIT A, CHLOROPLASTIC_MITOCHONDRIAL"/>
    <property type="match status" value="1"/>
</dbReference>
<dbReference type="PANTHER" id="PTHR43493">
    <property type="entry name" value="DNA GYRASE/TOPOISOMERASE SUBUNIT A"/>
    <property type="match status" value="1"/>
</dbReference>
<dbReference type="Pfam" id="PF03989">
    <property type="entry name" value="DNA_gyraseA_C"/>
    <property type="match status" value="6"/>
</dbReference>
<dbReference type="Pfam" id="PF00521">
    <property type="entry name" value="DNA_topoisoIV"/>
    <property type="match status" value="1"/>
</dbReference>
<dbReference type="SMART" id="SM00434">
    <property type="entry name" value="TOP4c"/>
    <property type="match status" value="1"/>
</dbReference>
<dbReference type="SUPFAM" id="SSF101904">
    <property type="entry name" value="GyrA/ParC C-terminal domain-like"/>
    <property type="match status" value="1"/>
</dbReference>
<dbReference type="SUPFAM" id="SSF56719">
    <property type="entry name" value="Type II DNA topoisomerase"/>
    <property type="match status" value="1"/>
</dbReference>
<dbReference type="PROSITE" id="PS52040">
    <property type="entry name" value="TOPO_IIA"/>
    <property type="match status" value="1"/>
</dbReference>
<keyword id="KW-0067">ATP-binding</keyword>
<keyword id="KW-0963">Cytoplasm</keyword>
<keyword id="KW-0238">DNA-binding</keyword>
<keyword id="KW-0413">Isomerase</keyword>
<keyword id="KW-0547">Nucleotide-binding</keyword>
<keyword id="KW-1185">Reference proteome</keyword>
<keyword id="KW-0799">Topoisomerase</keyword>
<evidence type="ECO:0000255" key="1">
    <source>
        <dbReference type="HAMAP-Rule" id="MF_01897"/>
    </source>
</evidence>
<evidence type="ECO:0000255" key="2">
    <source>
        <dbReference type="PROSITE-ProRule" id="PRU01384"/>
    </source>
</evidence>
<evidence type="ECO:0000256" key="3">
    <source>
        <dbReference type="SAM" id="MobiDB-lite"/>
    </source>
</evidence>
<sequence length="856" mass="95180">MSSDAPERFDPETGIAAEVETARIEREMEQSYIDYAMSVIAGRALPDARDGLKPVHRRILYAMHQSGISARSAHRKSSSIVGETMGDYHPHGDSAIYNALARMAQDFSMRNPLVDGQGNFGSVDGDPPAAMRYTEARMSPIAEELLDNIEMDTVEFTANYDDRLSEPAVLPAAFPNLLVNGSSGIAVGMSTNIPPHNLGEVIDATIHLIHHPECTVEDLMNHVQGPDFPTGANIVGQNAIYKAYKTGRGRVRVRAEFDVQDDRIVITELPFQTNKARLVERIADNVNAGTIEGIRDLRDESDRDGIRVVVELKRGANPDIVKNQLLEHHLESTFGVINLALVDGQPQVLTLKETLHEYLEHRRTVVRRRSQYELDEKRDRAHILEGRLRALEQVDDVVDIIRNSTDRDNAKAALRGEHVVESDERGESLPTFDFSEDQANHIVAMQLGSLTSLESDEIEDEYESVQERIERLQTILNNPDELDAVVEDELATIRDKYADERRTRIIEDDGTVTHEDLIAQEDVVVVVTEDDYIKRMSLEDFRSQHRGGKGIIGTSLKDGDTVSSVYVANTHDYLLYFTSHGQVYQLKTYQIPEMSRTARGKSAVNLLELDDGEQITAVVNTAEMDIDDDEERYFTMVTQSGYIKRTSVNSFQNIRSTGIIAISLGADDKLIDVEVTDGNRDIILGTRKGMAIRFNEGDVRSVGRSARGVHGIKLEDTDAVAALAAVDDDQDDWVLTVTEHGYGKRTDIDRYRQQSRNGKGLIDIKTNERNGHVCEVETVGISDELFMMSRKGQILRTPVDDISTVGRNTMGVIVMDLEDTDTVASVDTHPRTDDSSEADSGDGESESENATATTPS</sequence>
<protein>
    <recommendedName>
        <fullName evidence="1">DNA gyrase subunit A</fullName>
        <ecNumber evidence="1">5.6.2.2</ecNumber>
    </recommendedName>
</protein>